<sequence>MDWILPIAGIIAAIAFLILCIGIVAVLNSVKKNLDYVAKTLDGVEGQVQGITRETTDLLHKVNRLTEDIQGKVDRLNSVVDAVKGIGDSVQTLNSSVDRVTNSITHNISQNEDKISQVVQWSNVAMEIADKWQNRHYRRGSANYKANNVATDANHSYTSRVDK</sequence>
<dbReference type="EMBL" id="BX571856">
    <property type="protein sequence ID" value="CAG40808.1"/>
    <property type="molecule type" value="Genomic_DNA"/>
</dbReference>
<dbReference type="RefSeq" id="WP_000383814.1">
    <property type="nucleotide sequence ID" value="NC_002952.2"/>
</dbReference>
<dbReference type="SMR" id="Q6GFW9"/>
<dbReference type="KEGG" id="sar:SAR1817"/>
<dbReference type="HOGENOM" id="CLU_115870_0_0_9"/>
<dbReference type="Proteomes" id="UP000000596">
    <property type="component" value="Chromosome"/>
</dbReference>
<dbReference type="GO" id="GO:0005886">
    <property type="term" value="C:plasma membrane"/>
    <property type="evidence" value="ECO:0007669"/>
    <property type="project" value="UniProtKB-SubCell"/>
</dbReference>
<dbReference type="Gene3D" id="1.10.287.950">
    <property type="entry name" value="Methyl-accepting chemotaxis protein"/>
    <property type="match status" value="1"/>
</dbReference>
<dbReference type="InterPro" id="IPR009293">
    <property type="entry name" value="UPF0478"/>
</dbReference>
<dbReference type="PANTHER" id="PTHR40070">
    <property type="entry name" value="UPF0478 PROTEIN YTXG"/>
    <property type="match status" value="1"/>
</dbReference>
<dbReference type="PANTHER" id="PTHR40070:SF1">
    <property type="entry name" value="UPF0478 PROTEIN YTXG"/>
    <property type="match status" value="1"/>
</dbReference>
<dbReference type="Pfam" id="PF06103">
    <property type="entry name" value="DUF948"/>
    <property type="match status" value="1"/>
</dbReference>
<dbReference type="SUPFAM" id="SSF58104">
    <property type="entry name" value="Methyl-accepting chemotaxis protein (MCP) signaling domain"/>
    <property type="match status" value="1"/>
</dbReference>
<accession>Q6GFW9</accession>
<keyword id="KW-1003">Cell membrane</keyword>
<keyword id="KW-0472">Membrane</keyword>
<keyword id="KW-0812">Transmembrane</keyword>
<keyword id="KW-1133">Transmembrane helix</keyword>
<organism>
    <name type="scientific">Staphylococcus aureus (strain MRSA252)</name>
    <dbReference type="NCBI Taxonomy" id="282458"/>
    <lineage>
        <taxon>Bacteria</taxon>
        <taxon>Bacillati</taxon>
        <taxon>Bacillota</taxon>
        <taxon>Bacilli</taxon>
        <taxon>Bacillales</taxon>
        <taxon>Staphylococcaceae</taxon>
        <taxon>Staphylococcus</taxon>
    </lineage>
</organism>
<reference key="1">
    <citation type="journal article" date="2004" name="Proc. Natl. Acad. Sci. U.S.A.">
        <title>Complete genomes of two clinical Staphylococcus aureus strains: evidence for the rapid evolution of virulence and drug resistance.</title>
        <authorList>
            <person name="Holden M.T.G."/>
            <person name="Feil E.J."/>
            <person name="Lindsay J.A."/>
            <person name="Peacock S.J."/>
            <person name="Day N.P.J."/>
            <person name="Enright M.C."/>
            <person name="Foster T.J."/>
            <person name="Moore C.E."/>
            <person name="Hurst L."/>
            <person name="Atkin R."/>
            <person name="Barron A."/>
            <person name="Bason N."/>
            <person name="Bentley S.D."/>
            <person name="Chillingworth C."/>
            <person name="Chillingworth T."/>
            <person name="Churcher C."/>
            <person name="Clark L."/>
            <person name="Corton C."/>
            <person name="Cronin A."/>
            <person name="Doggett J."/>
            <person name="Dowd L."/>
            <person name="Feltwell T."/>
            <person name="Hance Z."/>
            <person name="Harris B."/>
            <person name="Hauser H."/>
            <person name="Holroyd S."/>
            <person name="Jagels K."/>
            <person name="James K.D."/>
            <person name="Lennard N."/>
            <person name="Line A."/>
            <person name="Mayes R."/>
            <person name="Moule S."/>
            <person name="Mungall K."/>
            <person name="Ormond D."/>
            <person name="Quail M.A."/>
            <person name="Rabbinowitsch E."/>
            <person name="Rutherford K.M."/>
            <person name="Sanders M."/>
            <person name="Sharp S."/>
            <person name="Simmonds M."/>
            <person name="Stevens K."/>
            <person name="Whitehead S."/>
            <person name="Barrell B.G."/>
            <person name="Spratt B.G."/>
            <person name="Parkhill J."/>
        </authorList>
    </citation>
    <scope>NUCLEOTIDE SEQUENCE [LARGE SCALE GENOMIC DNA]</scope>
    <source>
        <strain>MRSA252</strain>
    </source>
</reference>
<protein>
    <recommendedName>
        <fullName>UPF0478 protein SAR1817</fullName>
    </recommendedName>
</protein>
<evidence type="ECO:0000255" key="1"/>
<evidence type="ECO:0000305" key="2"/>
<comment type="subcellular location">
    <subcellularLocation>
        <location evidence="2">Cell membrane</location>
        <topology evidence="2">Single-pass membrane protein</topology>
    </subcellularLocation>
</comment>
<comment type="similarity">
    <text evidence="2">Belongs to the UPF0478 family.</text>
</comment>
<proteinExistence type="inferred from homology"/>
<feature type="chain" id="PRO_0000299438" description="UPF0478 protein SAR1817">
    <location>
        <begin position="1"/>
        <end position="163"/>
    </location>
</feature>
<feature type="transmembrane region" description="Helical" evidence="1">
    <location>
        <begin position="7"/>
        <end position="27"/>
    </location>
</feature>
<name>Y1817_STAAR</name>
<gene>
    <name type="ordered locus">SAR1817</name>
</gene>